<reference key="1">
    <citation type="submission" date="2003-10" db="EMBL/GenBank/DDBJ databases">
        <title>The complete genome sequence of the alkaliphilic Bacillus clausii KSM-K16.</title>
        <authorList>
            <person name="Takaki Y."/>
            <person name="Kageyama Y."/>
            <person name="Shimamura S."/>
            <person name="Suzuki H."/>
            <person name="Nishi S."/>
            <person name="Hatada Y."/>
            <person name="Kawai S."/>
            <person name="Ito S."/>
            <person name="Horikoshi K."/>
        </authorList>
    </citation>
    <scope>NUCLEOTIDE SEQUENCE [LARGE SCALE GENOMIC DNA]</scope>
    <source>
        <strain>KSM-K16</strain>
    </source>
</reference>
<keyword id="KW-0021">Allosteric enzyme</keyword>
<keyword id="KW-0328">Glycosyltransferase</keyword>
<keyword id="KW-0342">GTP-binding</keyword>
<keyword id="KW-0460">Magnesium</keyword>
<keyword id="KW-0547">Nucleotide-binding</keyword>
<keyword id="KW-1185">Reference proteome</keyword>
<keyword id="KW-0808">Transferase</keyword>
<organism>
    <name type="scientific">Shouchella clausii (strain KSM-K16)</name>
    <name type="common">Alkalihalobacillus clausii</name>
    <dbReference type="NCBI Taxonomy" id="66692"/>
    <lineage>
        <taxon>Bacteria</taxon>
        <taxon>Bacillati</taxon>
        <taxon>Bacillota</taxon>
        <taxon>Bacilli</taxon>
        <taxon>Bacillales</taxon>
        <taxon>Bacillaceae</taxon>
        <taxon>Shouchella</taxon>
    </lineage>
</organism>
<feature type="chain" id="PRO_0000120800" description="Uracil phosphoribosyltransferase">
    <location>
        <begin position="1"/>
        <end position="209"/>
    </location>
</feature>
<feature type="binding site" evidence="1">
    <location>
        <position position="79"/>
    </location>
    <ligand>
        <name>5-phospho-alpha-D-ribose 1-diphosphate</name>
        <dbReference type="ChEBI" id="CHEBI:58017"/>
    </ligand>
</feature>
<feature type="binding site" evidence="1">
    <location>
        <position position="104"/>
    </location>
    <ligand>
        <name>5-phospho-alpha-D-ribose 1-diphosphate</name>
        <dbReference type="ChEBI" id="CHEBI:58017"/>
    </ligand>
</feature>
<feature type="binding site" evidence="1">
    <location>
        <begin position="131"/>
        <end position="139"/>
    </location>
    <ligand>
        <name>5-phospho-alpha-D-ribose 1-diphosphate</name>
        <dbReference type="ChEBI" id="CHEBI:58017"/>
    </ligand>
</feature>
<feature type="binding site" evidence="1">
    <location>
        <position position="194"/>
    </location>
    <ligand>
        <name>uracil</name>
        <dbReference type="ChEBI" id="CHEBI:17568"/>
    </ligand>
</feature>
<feature type="binding site" evidence="1">
    <location>
        <begin position="199"/>
        <end position="201"/>
    </location>
    <ligand>
        <name>uracil</name>
        <dbReference type="ChEBI" id="CHEBI:17568"/>
    </ligand>
</feature>
<feature type="binding site" evidence="1">
    <location>
        <position position="200"/>
    </location>
    <ligand>
        <name>5-phospho-alpha-D-ribose 1-diphosphate</name>
        <dbReference type="ChEBI" id="CHEBI:58017"/>
    </ligand>
</feature>
<sequence length="209" mass="22904">MGKVHVLDHPLIQHKLSYIRDKHTGTKEFRELVDEVAALMAFEVTRDLPLEAAEIETPVGPAKVKKLAGKKLGLVPILRAGIGMSEGILRMIPAARVGHVGLYRDPETLKPHEYYVKLPNDVEERELLVIDPMLATGGSVVEAINSLKKRGAKSMRLICLVAAPEGVAYVQKEHPDVDIYLAALDEKLNEKGYIVPGLGDAGDRLFGTK</sequence>
<protein>
    <recommendedName>
        <fullName evidence="1">Uracil phosphoribosyltransferase</fullName>
        <ecNumber evidence="1">2.4.2.9</ecNumber>
    </recommendedName>
    <alternativeName>
        <fullName evidence="1">UMP pyrophosphorylase</fullName>
    </alternativeName>
    <alternativeName>
        <fullName evidence="1">UPRTase</fullName>
    </alternativeName>
</protein>
<dbReference type="EC" id="2.4.2.9" evidence="1"/>
<dbReference type="EMBL" id="AP006627">
    <property type="protein sequence ID" value="BAD66393.1"/>
    <property type="molecule type" value="Genomic_DNA"/>
</dbReference>
<dbReference type="RefSeq" id="WP_011248696.1">
    <property type="nucleotide sequence ID" value="NC_006582.1"/>
</dbReference>
<dbReference type="SMR" id="Q5WB67"/>
<dbReference type="STRING" id="66692.ABC3862"/>
<dbReference type="GeneID" id="86928187"/>
<dbReference type="KEGG" id="bcl:ABC3862"/>
<dbReference type="eggNOG" id="COG0035">
    <property type="taxonomic scope" value="Bacteria"/>
</dbReference>
<dbReference type="HOGENOM" id="CLU_067096_2_2_9"/>
<dbReference type="OrthoDB" id="9781675at2"/>
<dbReference type="UniPathway" id="UPA00574">
    <property type="reaction ID" value="UER00636"/>
</dbReference>
<dbReference type="Proteomes" id="UP000001168">
    <property type="component" value="Chromosome"/>
</dbReference>
<dbReference type="GO" id="GO:0005525">
    <property type="term" value="F:GTP binding"/>
    <property type="evidence" value="ECO:0007669"/>
    <property type="project" value="UniProtKB-KW"/>
</dbReference>
<dbReference type="GO" id="GO:0000287">
    <property type="term" value="F:magnesium ion binding"/>
    <property type="evidence" value="ECO:0007669"/>
    <property type="project" value="UniProtKB-UniRule"/>
</dbReference>
<dbReference type="GO" id="GO:0004845">
    <property type="term" value="F:uracil phosphoribosyltransferase activity"/>
    <property type="evidence" value="ECO:0007669"/>
    <property type="project" value="UniProtKB-UniRule"/>
</dbReference>
<dbReference type="GO" id="GO:0044206">
    <property type="term" value="P:UMP salvage"/>
    <property type="evidence" value="ECO:0007669"/>
    <property type="project" value="UniProtKB-UniRule"/>
</dbReference>
<dbReference type="GO" id="GO:0006223">
    <property type="term" value="P:uracil salvage"/>
    <property type="evidence" value="ECO:0007669"/>
    <property type="project" value="InterPro"/>
</dbReference>
<dbReference type="CDD" id="cd06223">
    <property type="entry name" value="PRTases_typeI"/>
    <property type="match status" value="1"/>
</dbReference>
<dbReference type="FunFam" id="3.40.50.2020:FF:000003">
    <property type="entry name" value="Uracil phosphoribosyltransferase"/>
    <property type="match status" value="1"/>
</dbReference>
<dbReference type="Gene3D" id="3.40.50.2020">
    <property type="match status" value="1"/>
</dbReference>
<dbReference type="HAMAP" id="MF_01218_B">
    <property type="entry name" value="Upp_B"/>
    <property type="match status" value="1"/>
</dbReference>
<dbReference type="InterPro" id="IPR000836">
    <property type="entry name" value="PRibTrfase_dom"/>
</dbReference>
<dbReference type="InterPro" id="IPR029057">
    <property type="entry name" value="PRTase-like"/>
</dbReference>
<dbReference type="InterPro" id="IPR034332">
    <property type="entry name" value="Upp_B"/>
</dbReference>
<dbReference type="InterPro" id="IPR050054">
    <property type="entry name" value="UPRTase/APRTase"/>
</dbReference>
<dbReference type="InterPro" id="IPR005765">
    <property type="entry name" value="Ura_phspho_trans"/>
</dbReference>
<dbReference type="NCBIfam" id="NF001097">
    <property type="entry name" value="PRK00129.1"/>
    <property type="match status" value="1"/>
</dbReference>
<dbReference type="NCBIfam" id="TIGR01091">
    <property type="entry name" value="upp"/>
    <property type="match status" value="1"/>
</dbReference>
<dbReference type="PANTHER" id="PTHR32315">
    <property type="entry name" value="ADENINE PHOSPHORIBOSYLTRANSFERASE"/>
    <property type="match status" value="1"/>
</dbReference>
<dbReference type="PANTHER" id="PTHR32315:SF4">
    <property type="entry name" value="URACIL PHOSPHORIBOSYLTRANSFERASE, CHLOROPLASTIC"/>
    <property type="match status" value="1"/>
</dbReference>
<dbReference type="Pfam" id="PF14681">
    <property type="entry name" value="UPRTase"/>
    <property type="match status" value="1"/>
</dbReference>
<dbReference type="SUPFAM" id="SSF53271">
    <property type="entry name" value="PRTase-like"/>
    <property type="match status" value="1"/>
</dbReference>
<comment type="function">
    <text evidence="1">Catalyzes the conversion of uracil and 5-phospho-alpha-D-ribose 1-diphosphate (PRPP) to UMP and diphosphate.</text>
</comment>
<comment type="catalytic activity">
    <reaction evidence="1">
        <text>UMP + diphosphate = 5-phospho-alpha-D-ribose 1-diphosphate + uracil</text>
        <dbReference type="Rhea" id="RHEA:13017"/>
        <dbReference type="ChEBI" id="CHEBI:17568"/>
        <dbReference type="ChEBI" id="CHEBI:33019"/>
        <dbReference type="ChEBI" id="CHEBI:57865"/>
        <dbReference type="ChEBI" id="CHEBI:58017"/>
        <dbReference type="EC" id="2.4.2.9"/>
    </reaction>
</comment>
<comment type="cofactor">
    <cofactor evidence="1">
        <name>Mg(2+)</name>
        <dbReference type="ChEBI" id="CHEBI:18420"/>
    </cofactor>
    <text evidence="1">Binds 1 Mg(2+) ion per subunit. The magnesium is bound as Mg-PRPP.</text>
</comment>
<comment type="activity regulation">
    <text evidence="1">Allosterically activated by GTP.</text>
</comment>
<comment type="pathway">
    <text evidence="1">Pyrimidine metabolism; UMP biosynthesis via salvage pathway; UMP from uracil: step 1/1.</text>
</comment>
<comment type="similarity">
    <text evidence="1">Belongs to the UPRTase family.</text>
</comment>
<proteinExistence type="inferred from homology"/>
<name>UPP_SHOC1</name>
<gene>
    <name evidence="1" type="primary">upp</name>
    <name type="ordered locus">ABC3862</name>
</gene>
<accession>Q5WB67</accession>
<evidence type="ECO:0000255" key="1">
    <source>
        <dbReference type="HAMAP-Rule" id="MF_01218"/>
    </source>
</evidence>